<keyword id="KW-0963">Cytoplasm</keyword>
<keyword id="KW-0378">Hydrolase</keyword>
<keyword id="KW-1185">Reference proteome</keyword>
<keyword id="KW-0694">RNA-binding</keyword>
<keyword id="KW-0820">tRNA-binding</keyword>
<feature type="chain" id="PRO_0000264042" description="Peptidyl-tRNA hydrolase">
    <location>
        <begin position="1"/>
        <end position="194"/>
    </location>
</feature>
<feature type="active site" description="Proton acceptor" evidence="1">
    <location>
        <position position="21"/>
    </location>
</feature>
<feature type="binding site" evidence="1">
    <location>
        <position position="16"/>
    </location>
    <ligand>
        <name>tRNA</name>
        <dbReference type="ChEBI" id="CHEBI:17843"/>
    </ligand>
</feature>
<feature type="binding site" evidence="1">
    <location>
        <position position="66"/>
    </location>
    <ligand>
        <name>tRNA</name>
        <dbReference type="ChEBI" id="CHEBI:17843"/>
    </ligand>
</feature>
<feature type="binding site" evidence="1">
    <location>
        <position position="68"/>
    </location>
    <ligand>
        <name>tRNA</name>
        <dbReference type="ChEBI" id="CHEBI:17843"/>
    </ligand>
</feature>
<feature type="binding site" evidence="1">
    <location>
        <position position="114"/>
    </location>
    <ligand>
        <name>tRNA</name>
        <dbReference type="ChEBI" id="CHEBI:17843"/>
    </ligand>
</feature>
<feature type="site" description="Discriminates between blocked and unblocked aminoacyl-tRNA" evidence="1">
    <location>
        <position position="11"/>
    </location>
</feature>
<feature type="site" description="Stabilizes the basic form of H active site to accept a proton" evidence="1">
    <location>
        <position position="93"/>
    </location>
</feature>
<accession>Q39RR0</accession>
<sequence>MATRLIIGLGNPGPKYQWTRHNAGFMVLDHLSRVMGTSVAKKSFSGLYGEGSWHGDRLLLLKPQTFMNLSGRSAAEALRFHKLTLSDLIVIHDDLDIPFGRVKLKEGGGHGGHNGLRSLMQELGGGGFVRIRIGVGRPLRGDAADYVLANFSSAEMAGLPALLDGVVDLLGELVRNGLPRTMSLYNNKDFLPAA</sequence>
<gene>
    <name evidence="1" type="primary">pth</name>
    <name type="ordered locus">Gmet_2846</name>
</gene>
<organism>
    <name type="scientific">Geobacter metallireducens (strain ATCC 53774 / DSM 7210 / GS-15)</name>
    <dbReference type="NCBI Taxonomy" id="269799"/>
    <lineage>
        <taxon>Bacteria</taxon>
        <taxon>Pseudomonadati</taxon>
        <taxon>Thermodesulfobacteriota</taxon>
        <taxon>Desulfuromonadia</taxon>
        <taxon>Geobacterales</taxon>
        <taxon>Geobacteraceae</taxon>
        <taxon>Geobacter</taxon>
    </lineage>
</organism>
<dbReference type="EC" id="3.1.1.29" evidence="1"/>
<dbReference type="EMBL" id="CP000148">
    <property type="protein sequence ID" value="ABB33064.1"/>
    <property type="molecule type" value="Genomic_DNA"/>
</dbReference>
<dbReference type="RefSeq" id="WP_004514570.1">
    <property type="nucleotide sequence ID" value="NC_007517.1"/>
</dbReference>
<dbReference type="SMR" id="Q39RR0"/>
<dbReference type="STRING" id="269799.Gmet_2846"/>
<dbReference type="KEGG" id="gme:Gmet_2846"/>
<dbReference type="eggNOG" id="COG0193">
    <property type="taxonomic scope" value="Bacteria"/>
</dbReference>
<dbReference type="HOGENOM" id="CLU_062456_4_1_7"/>
<dbReference type="Proteomes" id="UP000007073">
    <property type="component" value="Chromosome"/>
</dbReference>
<dbReference type="GO" id="GO:0005737">
    <property type="term" value="C:cytoplasm"/>
    <property type="evidence" value="ECO:0007669"/>
    <property type="project" value="UniProtKB-SubCell"/>
</dbReference>
<dbReference type="GO" id="GO:0004045">
    <property type="term" value="F:peptidyl-tRNA hydrolase activity"/>
    <property type="evidence" value="ECO:0007669"/>
    <property type="project" value="UniProtKB-UniRule"/>
</dbReference>
<dbReference type="GO" id="GO:0000049">
    <property type="term" value="F:tRNA binding"/>
    <property type="evidence" value="ECO:0007669"/>
    <property type="project" value="UniProtKB-UniRule"/>
</dbReference>
<dbReference type="GO" id="GO:0006515">
    <property type="term" value="P:protein quality control for misfolded or incompletely synthesized proteins"/>
    <property type="evidence" value="ECO:0007669"/>
    <property type="project" value="UniProtKB-UniRule"/>
</dbReference>
<dbReference type="GO" id="GO:0072344">
    <property type="term" value="P:rescue of stalled ribosome"/>
    <property type="evidence" value="ECO:0007669"/>
    <property type="project" value="UniProtKB-UniRule"/>
</dbReference>
<dbReference type="CDD" id="cd00462">
    <property type="entry name" value="PTH"/>
    <property type="match status" value="1"/>
</dbReference>
<dbReference type="FunFam" id="3.40.50.1470:FF:000001">
    <property type="entry name" value="Peptidyl-tRNA hydrolase"/>
    <property type="match status" value="1"/>
</dbReference>
<dbReference type="Gene3D" id="3.40.50.1470">
    <property type="entry name" value="Peptidyl-tRNA hydrolase"/>
    <property type="match status" value="1"/>
</dbReference>
<dbReference type="HAMAP" id="MF_00083">
    <property type="entry name" value="Pept_tRNA_hydro_bact"/>
    <property type="match status" value="1"/>
</dbReference>
<dbReference type="InterPro" id="IPR001328">
    <property type="entry name" value="Pept_tRNA_hydro"/>
</dbReference>
<dbReference type="InterPro" id="IPR018171">
    <property type="entry name" value="Pept_tRNA_hydro_CS"/>
</dbReference>
<dbReference type="InterPro" id="IPR036416">
    <property type="entry name" value="Pept_tRNA_hydro_sf"/>
</dbReference>
<dbReference type="NCBIfam" id="TIGR00447">
    <property type="entry name" value="pth"/>
    <property type="match status" value="1"/>
</dbReference>
<dbReference type="PANTHER" id="PTHR17224">
    <property type="entry name" value="PEPTIDYL-TRNA HYDROLASE"/>
    <property type="match status" value="1"/>
</dbReference>
<dbReference type="PANTHER" id="PTHR17224:SF1">
    <property type="entry name" value="PEPTIDYL-TRNA HYDROLASE"/>
    <property type="match status" value="1"/>
</dbReference>
<dbReference type="Pfam" id="PF01195">
    <property type="entry name" value="Pept_tRNA_hydro"/>
    <property type="match status" value="1"/>
</dbReference>
<dbReference type="SUPFAM" id="SSF53178">
    <property type="entry name" value="Peptidyl-tRNA hydrolase-like"/>
    <property type="match status" value="1"/>
</dbReference>
<dbReference type="PROSITE" id="PS01195">
    <property type="entry name" value="PEPT_TRNA_HYDROL_1"/>
    <property type="match status" value="1"/>
</dbReference>
<dbReference type="PROSITE" id="PS01196">
    <property type="entry name" value="PEPT_TRNA_HYDROL_2"/>
    <property type="match status" value="1"/>
</dbReference>
<reference key="1">
    <citation type="journal article" date="2009" name="BMC Microbiol.">
        <title>The genome sequence of Geobacter metallireducens: features of metabolism, physiology and regulation common and dissimilar to Geobacter sulfurreducens.</title>
        <authorList>
            <person name="Aklujkar M."/>
            <person name="Krushkal J."/>
            <person name="DiBartolo G."/>
            <person name="Lapidus A."/>
            <person name="Land M.L."/>
            <person name="Lovley D.R."/>
        </authorList>
    </citation>
    <scope>NUCLEOTIDE SEQUENCE [LARGE SCALE GENOMIC DNA]</scope>
    <source>
        <strain>ATCC 53774 / DSM 7210 / GS-15</strain>
    </source>
</reference>
<proteinExistence type="inferred from homology"/>
<name>PTH_GEOMG</name>
<comment type="function">
    <text evidence="1">Hydrolyzes ribosome-free peptidyl-tRNAs (with 1 or more amino acids incorporated), which drop off the ribosome during protein synthesis, or as a result of ribosome stalling.</text>
</comment>
<comment type="function">
    <text evidence="1">Catalyzes the release of premature peptidyl moieties from peptidyl-tRNA molecules trapped in stalled 50S ribosomal subunits, and thus maintains levels of free tRNAs and 50S ribosomes.</text>
</comment>
<comment type="catalytic activity">
    <reaction evidence="1">
        <text>an N-acyl-L-alpha-aminoacyl-tRNA + H2O = an N-acyl-L-amino acid + a tRNA + H(+)</text>
        <dbReference type="Rhea" id="RHEA:54448"/>
        <dbReference type="Rhea" id="RHEA-COMP:10123"/>
        <dbReference type="Rhea" id="RHEA-COMP:13883"/>
        <dbReference type="ChEBI" id="CHEBI:15377"/>
        <dbReference type="ChEBI" id="CHEBI:15378"/>
        <dbReference type="ChEBI" id="CHEBI:59874"/>
        <dbReference type="ChEBI" id="CHEBI:78442"/>
        <dbReference type="ChEBI" id="CHEBI:138191"/>
        <dbReference type="EC" id="3.1.1.29"/>
    </reaction>
</comment>
<comment type="subunit">
    <text evidence="1">Monomer.</text>
</comment>
<comment type="subcellular location">
    <subcellularLocation>
        <location evidence="1">Cytoplasm</location>
    </subcellularLocation>
</comment>
<comment type="similarity">
    <text evidence="1">Belongs to the PTH family.</text>
</comment>
<evidence type="ECO:0000255" key="1">
    <source>
        <dbReference type="HAMAP-Rule" id="MF_00083"/>
    </source>
</evidence>
<protein>
    <recommendedName>
        <fullName evidence="1">Peptidyl-tRNA hydrolase</fullName>
        <shortName evidence="1">Pth</shortName>
        <ecNumber evidence="1">3.1.1.29</ecNumber>
    </recommendedName>
</protein>